<evidence type="ECO:0000255" key="1">
    <source>
        <dbReference type="HAMAP-Rule" id="MF_01848"/>
    </source>
</evidence>
<evidence type="ECO:0000256" key="2">
    <source>
        <dbReference type="SAM" id="MobiDB-lite"/>
    </source>
</evidence>
<gene>
    <name evidence="1" type="primary">rlmF</name>
    <name type="ordered locus">Sden_0097</name>
</gene>
<organism>
    <name type="scientific">Shewanella denitrificans (strain OS217 / ATCC BAA-1090 / DSM 15013)</name>
    <dbReference type="NCBI Taxonomy" id="318161"/>
    <lineage>
        <taxon>Bacteria</taxon>
        <taxon>Pseudomonadati</taxon>
        <taxon>Pseudomonadota</taxon>
        <taxon>Gammaproteobacteria</taxon>
        <taxon>Alteromonadales</taxon>
        <taxon>Shewanellaceae</taxon>
        <taxon>Shewanella</taxon>
    </lineage>
</organism>
<keyword id="KW-0963">Cytoplasm</keyword>
<keyword id="KW-0489">Methyltransferase</keyword>
<keyword id="KW-1185">Reference proteome</keyword>
<keyword id="KW-0698">rRNA processing</keyword>
<keyword id="KW-0949">S-adenosyl-L-methionine</keyword>
<keyword id="KW-0808">Transferase</keyword>
<feature type="chain" id="PRO_0000349954" description="Ribosomal RNA large subunit methyltransferase F">
    <location>
        <begin position="1"/>
        <end position="360"/>
    </location>
</feature>
<feature type="region of interest" description="Disordered" evidence="2">
    <location>
        <begin position="1"/>
        <end position="36"/>
    </location>
</feature>
<feature type="compositionally biased region" description="Low complexity" evidence="2">
    <location>
        <begin position="23"/>
        <end position="36"/>
    </location>
</feature>
<reference key="1">
    <citation type="submission" date="2006-03" db="EMBL/GenBank/DDBJ databases">
        <title>Complete sequence of Shewanella denitrificans OS217.</title>
        <authorList>
            <consortium name="US DOE Joint Genome Institute"/>
            <person name="Copeland A."/>
            <person name="Lucas S."/>
            <person name="Lapidus A."/>
            <person name="Barry K."/>
            <person name="Detter J.C."/>
            <person name="Glavina del Rio T."/>
            <person name="Hammon N."/>
            <person name="Israni S."/>
            <person name="Dalin E."/>
            <person name="Tice H."/>
            <person name="Pitluck S."/>
            <person name="Brettin T."/>
            <person name="Bruce D."/>
            <person name="Han C."/>
            <person name="Tapia R."/>
            <person name="Gilna P."/>
            <person name="Kiss H."/>
            <person name="Schmutz J."/>
            <person name="Larimer F."/>
            <person name="Land M."/>
            <person name="Hauser L."/>
            <person name="Kyrpides N."/>
            <person name="Lykidis A."/>
            <person name="Richardson P."/>
        </authorList>
    </citation>
    <scope>NUCLEOTIDE SEQUENCE [LARGE SCALE GENOMIC DNA]</scope>
    <source>
        <strain>OS217 / ATCC BAA-1090 / DSM 15013</strain>
    </source>
</reference>
<dbReference type="EC" id="2.1.1.181" evidence="1"/>
<dbReference type="EMBL" id="CP000302">
    <property type="protein sequence ID" value="ABE53394.1"/>
    <property type="molecule type" value="Genomic_DNA"/>
</dbReference>
<dbReference type="RefSeq" id="WP_011494563.1">
    <property type="nucleotide sequence ID" value="NC_007954.1"/>
</dbReference>
<dbReference type="SMR" id="Q12T32"/>
<dbReference type="STRING" id="318161.Sden_0097"/>
<dbReference type="KEGG" id="sdn:Sden_0097"/>
<dbReference type="eggNOG" id="COG3129">
    <property type="taxonomic scope" value="Bacteria"/>
</dbReference>
<dbReference type="HOGENOM" id="CLU_027534_3_0_6"/>
<dbReference type="OrthoDB" id="1115728at2"/>
<dbReference type="Proteomes" id="UP000001982">
    <property type="component" value="Chromosome"/>
</dbReference>
<dbReference type="GO" id="GO:0005737">
    <property type="term" value="C:cytoplasm"/>
    <property type="evidence" value="ECO:0007669"/>
    <property type="project" value="UniProtKB-SubCell"/>
</dbReference>
<dbReference type="GO" id="GO:0052907">
    <property type="term" value="F:23S rRNA (adenine(1618)-N(6))-methyltransferase activity"/>
    <property type="evidence" value="ECO:0007669"/>
    <property type="project" value="UniProtKB-EC"/>
</dbReference>
<dbReference type="GO" id="GO:0070475">
    <property type="term" value="P:rRNA base methylation"/>
    <property type="evidence" value="ECO:0007669"/>
    <property type="project" value="TreeGrafter"/>
</dbReference>
<dbReference type="CDD" id="cd02440">
    <property type="entry name" value="AdoMet_MTases"/>
    <property type="match status" value="1"/>
</dbReference>
<dbReference type="Gene3D" id="3.40.50.150">
    <property type="entry name" value="Vaccinia Virus protein VP39"/>
    <property type="match status" value="1"/>
</dbReference>
<dbReference type="HAMAP" id="MF_01848">
    <property type="entry name" value="23SrRNA_methyltr_F"/>
    <property type="match status" value="1"/>
</dbReference>
<dbReference type="InterPro" id="IPR010286">
    <property type="entry name" value="METTL16/RlmF"/>
</dbReference>
<dbReference type="InterPro" id="IPR016909">
    <property type="entry name" value="rRNA_lsu_MeTfrase_F"/>
</dbReference>
<dbReference type="InterPro" id="IPR029063">
    <property type="entry name" value="SAM-dependent_MTases_sf"/>
</dbReference>
<dbReference type="NCBIfam" id="NF008725">
    <property type="entry name" value="PRK11727.1"/>
    <property type="match status" value="1"/>
</dbReference>
<dbReference type="PANTHER" id="PTHR13393:SF0">
    <property type="entry name" value="RNA N6-ADENOSINE-METHYLTRANSFERASE METTL16"/>
    <property type="match status" value="1"/>
</dbReference>
<dbReference type="PANTHER" id="PTHR13393">
    <property type="entry name" value="SAM-DEPENDENT METHYLTRANSFERASE"/>
    <property type="match status" value="1"/>
</dbReference>
<dbReference type="Pfam" id="PF05971">
    <property type="entry name" value="Methyltransf_10"/>
    <property type="match status" value="1"/>
</dbReference>
<dbReference type="PIRSF" id="PIRSF029038">
    <property type="entry name" value="Mtase_YbiN_prd"/>
    <property type="match status" value="1"/>
</dbReference>
<dbReference type="SUPFAM" id="SSF53335">
    <property type="entry name" value="S-adenosyl-L-methionine-dependent methyltransferases"/>
    <property type="match status" value="1"/>
</dbReference>
<sequence>MSKLISKQGKRPALSQSGLAKPSTSKKSSASKNANTETAKLLTKALHPRNVHKYGYDFAALSKTLPALTPFVGPNAYGNISIDFANPDAVKQLNAALLLHHYSIRDWDIPHGYLCPPIPGRVDYLHYLADLLSAPHKGKANRNIRALDIGTGANGIYPLLGIESYSWQFVASDIDKVSLDNVDEILAKNPQLAAKLSLRLQLNPKAIFNGVIEKDEYFDVSLCNPPFHRSLADANAGTQRKLSNLAKNRGQSQQQAVQAKVALNFGGQKAELWCEGGEAAFLANMISESKGFAAQCLWFTSLVSKSENLKPCYAQLAKQGTSEVKTIEMHQGNKITRILAWSYLSLSQRQAWAKLRDQSR</sequence>
<proteinExistence type="inferred from homology"/>
<accession>Q12T32</accession>
<name>RLMF_SHEDO</name>
<protein>
    <recommendedName>
        <fullName evidence="1">Ribosomal RNA large subunit methyltransferase F</fullName>
        <ecNumber evidence="1">2.1.1.181</ecNumber>
    </recommendedName>
    <alternativeName>
        <fullName evidence="1">23S rRNA mA1618 methyltransferase</fullName>
    </alternativeName>
    <alternativeName>
        <fullName evidence="1">rRNA adenine N-6-methyltransferase</fullName>
    </alternativeName>
</protein>
<comment type="function">
    <text evidence="1">Specifically methylates the adenine in position 1618 of 23S rRNA.</text>
</comment>
<comment type="catalytic activity">
    <reaction evidence="1">
        <text>adenosine(1618) in 23S rRNA + S-adenosyl-L-methionine = N(6)-methyladenosine(1618) in 23S rRNA + S-adenosyl-L-homocysteine + H(+)</text>
        <dbReference type="Rhea" id="RHEA:16497"/>
        <dbReference type="Rhea" id="RHEA-COMP:10229"/>
        <dbReference type="Rhea" id="RHEA-COMP:10231"/>
        <dbReference type="ChEBI" id="CHEBI:15378"/>
        <dbReference type="ChEBI" id="CHEBI:57856"/>
        <dbReference type="ChEBI" id="CHEBI:59789"/>
        <dbReference type="ChEBI" id="CHEBI:74411"/>
        <dbReference type="ChEBI" id="CHEBI:74449"/>
        <dbReference type="EC" id="2.1.1.181"/>
    </reaction>
</comment>
<comment type="subcellular location">
    <subcellularLocation>
        <location evidence="1">Cytoplasm</location>
    </subcellularLocation>
</comment>
<comment type="similarity">
    <text evidence="1">Belongs to the methyltransferase superfamily. METTL16/RlmF family.</text>
</comment>